<gene>
    <name evidence="13" type="primary">PGA10</name>
    <name type="synonym">CRW2</name>
    <name evidence="14" type="synonym">RBT51</name>
    <name type="synonym">RBT8</name>
    <name type="ordered locus">CAALFM_C400450CA</name>
    <name type="ORF">CaO19.13119</name>
    <name type="ORF">CaO19.5674</name>
</gene>
<proteinExistence type="evidence at protein level"/>
<name>PGA10_CANAL</name>
<evidence type="ECO:0000250" key="1">
    <source>
        <dbReference type="UniProtKB" id="Q5A0X8"/>
    </source>
</evidence>
<evidence type="ECO:0000255" key="2"/>
<evidence type="ECO:0000255" key="3">
    <source>
        <dbReference type="PROSITE-ProRule" id="PRU01356"/>
    </source>
</evidence>
<evidence type="ECO:0000256" key="4">
    <source>
        <dbReference type="SAM" id="MobiDB-lite"/>
    </source>
</evidence>
<evidence type="ECO:0000269" key="5">
    <source>
    </source>
</evidence>
<evidence type="ECO:0000269" key="6">
    <source>
    </source>
</evidence>
<evidence type="ECO:0000269" key="7">
    <source>
    </source>
</evidence>
<evidence type="ECO:0000269" key="8">
    <source>
    </source>
</evidence>
<evidence type="ECO:0000269" key="9">
    <source>
    </source>
</evidence>
<evidence type="ECO:0000269" key="10">
    <source>
    </source>
</evidence>
<evidence type="ECO:0000269" key="11">
    <source>
    </source>
</evidence>
<evidence type="ECO:0000303" key="12">
    <source>
    </source>
</evidence>
<evidence type="ECO:0000303" key="13">
    <source>
    </source>
</evidence>
<evidence type="ECO:0000303" key="14">
    <source>
    </source>
</evidence>
<evidence type="ECO:0000305" key="15"/>
<sequence length="250" mass="25163">MMSFSLLSIVSIALAATVSATSDGTNAYTAYPSVAKTASINGFADKIYDQLPECAKECVKQSTSNTPCPYWDTGCLCVMPQFGGAIGDCVAKNCKGKEVDSVESLATSICSSAGVGEPYWMIPSSVSDALAKAANAASATTSVETATKSAAAELATTSDTTIVASTSHESKVAETSVAQQTASTEKSSAAETSRAKETSKAEESSKAEETSVAQSSSSANVASVSAETANAGNMPVIAIGGVIAAFAALI</sequence>
<organism>
    <name type="scientific">Candida albicans (strain SC5314 / ATCC MYA-2876)</name>
    <name type="common">Yeast</name>
    <dbReference type="NCBI Taxonomy" id="237561"/>
    <lineage>
        <taxon>Eukaryota</taxon>
        <taxon>Fungi</taxon>
        <taxon>Dikarya</taxon>
        <taxon>Ascomycota</taxon>
        <taxon>Saccharomycotina</taxon>
        <taxon>Pichiomycetes</taxon>
        <taxon>Debaryomycetaceae</taxon>
        <taxon>Candida/Lodderomyces clade</taxon>
        <taxon>Candida</taxon>
    </lineage>
</organism>
<feature type="signal peptide" evidence="2">
    <location>
        <begin position="1"/>
        <end position="20"/>
    </location>
</feature>
<feature type="chain" id="PRO_0000424648" description="GPI-anchored hemophore PGA10">
    <location>
        <begin position="21"/>
        <end position="230"/>
    </location>
</feature>
<feature type="propeptide" id="PRO_0000424649" description="Removed in mature form" evidence="2">
    <location>
        <begin position="231"/>
        <end position="250"/>
    </location>
</feature>
<feature type="domain" description="CFEM" evidence="3 12">
    <location>
        <begin position="26"/>
        <end position="137"/>
    </location>
</feature>
<feature type="region of interest" description="Disordered" evidence="4">
    <location>
        <begin position="165"/>
        <end position="219"/>
    </location>
</feature>
<feature type="compositionally biased region" description="Low complexity" evidence="4">
    <location>
        <begin position="178"/>
        <end position="192"/>
    </location>
</feature>
<feature type="compositionally biased region" description="Basic and acidic residues" evidence="4">
    <location>
        <begin position="193"/>
        <end position="209"/>
    </location>
</feature>
<feature type="compositionally biased region" description="Low complexity" evidence="4">
    <location>
        <begin position="210"/>
        <end position="219"/>
    </location>
</feature>
<feature type="binding site" description="axial binding residue" evidence="3">
    <location>
        <position position="72"/>
    </location>
    <ligand>
        <name>heme</name>
        <dbReference type="ChEBI" id="CHEBI:30413"/>
    </ligand>
    <ligandPart>
        <name>Fe</name>
        <dbReference type="ChEBI" id="CHEBI:18248"/>
    </ligandPart>
</feature>
<feature type="lipid moiety-binding region" description="GPI-anchor amidated asparagine" evidence="2">
    <location>
        <position position="230"/>
    </location>
</feature>
<feature type="disulfide bond" evidence="3">
    <location>
        <begin position="54"/>
        <end position="94"/>
    </location>
</feature>
<feature type="disulfide bond" evidence="3">
    <location>
        <begin position="58"/>
        <end position="89"/>
    </location>
</feature>
<feature type="disulfide bond" evidence="3">
    <location>
        <begin position="68"/>
        <end position="75"/>
    </location>
</feature>
<feature type="disulfide bond" evidence="3">
    <location>
        <begin position="77"/>
        <end position="110"/>
    </location>
</feature>
<reference key="1">
    <citation type="journal article" date="2004" name="Proc. Natl. Acad. Sci. U.S.A.">
        <title>The diploid genome sequence of Candida albicans.</title>
        <authorList>
            <person name="Jones T."/>
            <person name="Federspiel N.A."/>
            <person name="Chibana H."/>
            <person name="Dungan J."/>
            <person name="Kalman S."/>
            <person name="Magee B.B."/>
            <person name="Newport G."/>
            <person name="Thorstenson Y.R."/>
            <person name="Agabian N."/>
            <person name="Magee P.T."/>
            <person name="Davis R.W."/>
            <person name="Scherer S."/>
        </authorList>
    </citation>
    <scope>NUCLEOTIDE SEQUENCE [LARGE SCALE GENOMIC DNA]</scope>
    <source>
        <strain>SC5314 / ATCC MYA-2876</strain>
    </source>
</reference>
<reference key="2">
    <citation type="journal article" date="2007" name="Genome Biol.">
        <title>Assembly of the Candida albicans genome into sixteen supercontigs aligned on the eight chromosomes.</title>
        <authorList>
            <person name="van het Hoog M."/>
            <person name="Rast T.J."/>
            <person name="Martchenko M."/>
            <person name="Grindle S."/>
            <person name="Dignard D."/>
            <person name="Hogues H."/>
            <person name="Cuomo C."/>
            <person name="Berriman M."/>
            <person name="Scherer S."/>
            <person name="Magee B.B."/>
            <person name="Whiteway M."/>
            <person name="Chibana H."/>
            <person name="Nantel A."/>
            <person name="Magee P.T."/>
        </authorList>
    </citation>
    <scope>GENOME REANNOTATION</scope>
    <source>
        <strain>SC5314 / ATCC MYA-2876</strain>
    </source>
</reference>
<reference key="3">
    <citation type="journal article" date="2013" name="Genome Biol.">
        <title>Assembly of a phased diploid Candida albicans genome facilitates allele-specific measurements and provides a simple model for repeat and indel structure.</title>
        <authorList>
            <person name="Muzzey D."/>
            <person name="Schwartz K."/>
            <person name="Weissman J.S."/>
            <person name="Sherlock G."/>
        </authorList>
    </citation>
    <scope>NUCLEOTIDE SEQUENCE [LARGE SCALE GENOMIC DNA]</scope>
    <scope>GENOME REANNOTATION</scope>
    <source>
        <strain>SC5314 / ATCC MYA-2876</strain>
    </source>
</reference>
<reference key="4">
    <citation type="journal article" date="2003" name="Trends Biochem. Sci.">
        <title>An eight-cysteine-containing CFEM domain unique to a group of fungal membrane proteins.</title>
        <authorList>
            <person name="Kulkarni R.D."/>
            <person name="Kelkar H.S."/>
            <person name="Dean R.A."/>
        </authorList>
    </citation>
    <scope>DOMAIN</scope>
</reference>
<reference key="5">
    <citation type="journal article" date="2003" name="Yeast">
        <title>Genome-wide identification of fungal GPI proteins.</title>
        <authorList>
            <person name="De Groot P.W."/>
            <person name="Hellingwerf K.J."/>
            <person name="Klis F.M."/>
        </authorList>
    </citation>
    <scope>PREDICTION OF GPI-ANCHOR</scope>
</reference>
<reference key="6">
    <citation type="journal article" date="2004" name="Mol. Microbiol.">
        <title>A family of Candida cell surface haem-binding proteins involved in haemin and haemoglobin-iron utilization.</title>
        <authorList>
            <person name="Weissman Z."/>
            <person name="Kornitzer D."/>
        </authorList>
    </citation>
    <scope>FUNCTION</scope>
    <scope>HEME-BINDING</scope>
    <scope>GLYCOSYLATION</scope>
    <scope>SUBCELLULAR LOCATION</scope>
</reference>
<reference key="7">
    <citation type="journal article" date="2006" name="FEMS Yeast Res.">
        <title>Biofilm formation by Candida albicans mutants for genes coding fungal proteins exhibiting the eight-cysteine-containing CFEM domain.</title>
        <authorList>
            <person name="Perez A."/>
            <person name="Pedros B."/>
            <person name="Murgui A."/>
            <person name="Casanova M."/>
            <person name="Lopez-Ribot J.L."/>
            <person name="Martinez J.P."/>
        </authorList>
    </citation>
    <scope>FUNCTION</scope>
</reference>
<reference key="8">
    <citation type="journal article" date="2008" name="Microbiology">
        <title>Hypoxic conditions and iron restriction affect the cell-wall proteome of Candida albicans grown under vagina-simulative conditions.</title>
        <authorList>
            <person name="Sosinska G.J."/>
            <person name="de Groot P.W."/>
            <person name="Teixeira de Mattos M.J."/>
            <person name="Dekker H.L."/>
            <person name="de Koster C.G."/>
            <person name="Hellingwerf K.J."/>
            <person name="Klis F.M."/>
        </authorList>
    </citation>
    <scope>IDENTIFICATION BY MASS SPECTROMETRY</scope>
    <scope>SUBCELLULAR LOCATION</scope>
    <scope>INDUCTION</scope>
</reference>
<reference key="9">
    <citation type="journal article" date="2008" name="Mol. Microbiol.">
        <title>An endocytic mechanism for haemoglobin-iron acquisition in Candida albicans.</title>
        <authorList>
            <person name="Weissman Z."/>
            <person name="Shemer R."/>
            <person name="Conibear E."/>
            <person name="Kornitzer D."/>
        </authorList>
    </citation>
    <scope>FUNCTION</scope>
    <scope>SUBCELLULAR LOCATION</scope>
</reference>
<reference key="10">
    <citation type="journal article" date="2010" name="Eukaryot. Cell">
        <title>Regulation of the hypoxic response in Candida albicans.</title>
        <authorList>
            <person name="Synnott J.M."/>
            <person name="Guida A."/>
            <person name="Mulhern-Haughey S."/>
            <person name="Higgins D.G."/>
            <person name="Butler G."/>
        </authorList>
    </citation>
    <scope>INDUCTION</scope>
</reference>
<reference key="11">
    <citation type="journal article" date="2011" name="FEMS Yeast Res.">
        <title>Some biological features of Candida albicans mutants for genes coding fungal proteins containing the CFEM domain.</title>
        <authorList>
            <person name="Perez A."/>
            <person name="Ramage G."/>
            <person name="Blanes R."/>
            <person name="Murgui A."/>
            <person name="Casanova M."/>
            <person name="Martinez J.P."/>
        </authorList>
    </citation>
    <scope>INDUCTION</scope>
    <scope>FUNCTION</scope>
</reference>
<accession>Q59UP6</accession>
<accession>A0A1D8PL58</accession>
<dbReference type="EMBL" id="CP017626">
    <property type="protein sequence ID" value="AOW28838.1"/>
    <property type="molecule type" value="Genomic_DNA"/>
</dbReference>
<dbReference type="RefSeq" id="XP_713355.2">
    <property type="nucleotide sequence ID" value="XM_708262.2"/>
</dbReference>
<dbReference type="SMR" id="Q59UP6"/>
<dbReference type="STRING" id="237561.Q59UP6"/>
<dbReference type="EnsemblFungi" id="C4_00450C_A-T">
    <property type="protein sequence ID" value="C4_00450C_A-T-p1"/>
    <property type="gene ID" value="C4_00450C_A"/>
</dbReference>
<dbReference type="GeneID" id="3645009"/>
<dbReference type="KEGG" id="cal:CAALFM_C400450CA"/>
<dbReference type="CGD" id="CAL0000193946">
    <property type="gene designation" value="PGA10"/>
</dbReference>
<dbReference type="VEuPathDB" id="FungiDB:C4_00450C_A"/>
<dbReference type="eggNOG" id="ENOG502SFDE">
    <property type="taxonomic scope" value="Eukaryota"/>
</dbReference>
<dbReference type="HOGENOM" id="CLU_079397_0_0_1"/>
<dbReference type="InParanoid" id="Q59UP6"/>
<dbReference type="OrthoDB" id="2496787at2759"/>
<dbReference type="PRO" id="PR:Q59UP6"/>
<dbReference type="Proteomes" id="UP000000559">
    <property type="component" value="Chromosome 4"/>
</dbReference>
<dbReference type="GO" id="GO:0005576">
    <property type="term" value="C:extracellular region"/>
    <property type="evidence" value="ECO:0000318"/>
    <property type="project" value="GO_Central"/>
</dbReference>
<dbReference type="GO" id="GO:0009277">
    <property type="term" value="C:fungal-type cell wall"/>
    <property type="evidence" value="ECO:0000314"/>
    <property type="project" value="CGD"/>
</dbReference>
<dbReference type="GO" id="GO:0005886">
    <property type="term" value="C:plasma membrane"/>
    <property type="evidence" value="ECO:0007669"/>
    <property type="project" value="UniProtKB-SubCell"/>
</dbReference>
<dbReference type="GO" id="GO:0098552">
    <property type="term" value="C:side of membrane"/>
    <property type="evidence" value="ECO:0007669"/>
    <property type="project" value="UniProtKB-KW"/>
</dbReference>
<dbReference type="GO" id="GO:0020037">
    <property type="term" value="F:heme binding"/>
    <property type="evidence" value="ECO:0000314"/>
    <property type="project" value="CGD"/>
</dbReference>
<dbReference type="GO" id="GO:0046872">
    <property type="term" value="F:metal ion binding"/>
    <property type="evidence" value="ECO:0007669"/>
    <property type="project" value="UniProtKB-KW"/>
</dbReference>
<dbReference type="GO" id="GO:0020028">
    <property type="term" value="P:endocytic hemoglobin import into cell"/>
    <property type="evidence" value="ECO:0000315"/>
    <property type="project" value="CGD"/>
</dbReference>
<dbReference type="GO" id="GO:0006879">
    <property type="term" value="P:intracellular iron ion homeostasis"/>
    <property type="evidence" value="ECO:0000315"/>
    <property type="project" value="CGD"/>
</dbReference>
<dbReference type="GO" id="GO:0044011">
    <property type="term" value="P:single-species biofilm formation on inanimate substrate"/>
    <property type="evidence" value="ECO:0000315"/>
    <property type="project" value="CGD"/>
</dbReference>
<dbReference type="InterPro" id="IPR008427">
    <property type="entry name" value="Extracellular_membr_CFEM_dom"/>
</dbReference>
<dbReference type="Pfam" id="PF05730">
    <property type="entry name" value="CFEM"/>
    <property type="match status" value="1"/>
</dbReference>
<dbReference type="SMART" id="SM00747">
    <property type="entry name" value="CFEM"/>
    <property type="match status" value="1"/>
</dbReference>
<dbReference type="PROSITE" id="PS52012">
    <property type="entry name" value="CFEM"/>
    <property type="match status" value="1"/>
</dbReference>
<keyword id="KW-1003">Cell membrane</keyword>
<keyword id="KW-0134">Cell wall</keyword>
<keyword id="KW-1015">Disulfide bond</keyword>
<keyword id="KW-0325">Glycoprotein</keyword>
<keyword id="KW-0336">GPI-anchor</keyword>
<keyword id="KW-0349">Heme</keyword>
<keyword id="KW-0408">Iron</keyword>
<keyword id="KW-0449">Lipoprotein</keyword>
<keyword id="KW-0472">Membrane</keyword>
<keyword id="KW-0479">Metal-binding</keyword>
<keyword id="KW-1185">Reference proteome</keyword>
<keyword id="KW-0964">Secreted</keyword>
<keyword id="KW-0732">Signal</keyword>
<comment type="function">
    <text evidence="6 7 9 11">Heme-binding protein involved in heme-iron utilization. The ability to acquire iron from host tissues is a major virulence factor of pathogenic microorganisms. Involved in biofilm formation.</text>
</comment>
<comment type="subcellular location">
    <subcellularLocation>
        <location evidence="8">Secreted</location>
        <location evidence="8">Cell wall</location>
    </subcellularLocation>
    <subcellularLocation>
        <location evidence="6 9">Cell membrane</location>
        <topology evidence="13">Lipid-anchor</topology>
        <topology evidence="13">GPI-anchor</topology>
    </subcellularLocation>
    <text evidence="9">Found anchored in the cell membrane as well as a covalently-linked GPI-modified cell wall protein (GPI-CWP).</text>
</comment>
<comment type="induction">
    <text evidence="8 10 11">Induced by RIM101 at pH8, hypoxia, ketoconazole, ciclopirox, and during hyphal growth. Regulated by UPC2 and BCR1.</text>
</comment>
<comment type="domain">
    <text evidence="1 5">The CFEM domain is involved in heme-binding and contains 8 cysteines and is found in proteins from several pathogenic fungi, including both human and plant pathogens (PubMed:12633989). The CFEM domain adopts a novel helical-basket fold that consists of six alpha-helices, and is uniquely stabilized by four disulfide bonds formed by its 8 signature cysteines (By similarity).</text>
</comment>
<comment type="PTM">
    <text evidence="15">The GPI-anchor is attached to the protein in the endoplasmic reticulum and serves to target the protein to the cell surface. There, the glucosamine-inositol phospholipid moiety is cleaved off and the GPI-modified mannoprotein is covalently attached via its lipidless GPI glycan remnant to the 1,6-beta-glucan of the outer cell wall layer.</text>
</comment>
<comment type="PTM">
    <text evidence="6">Mannosylated.</text>
</comment>
<comment type="similarity">
    <text evidence="15">Belongs to the RBT5 family.</text>
</comment>
<protein>
    <recommendedName>
        <fullName evidence="15">GPI-anchored hemophore PGA10</fullName>
    </recommendedName>
    <alternativeName>
        <fullName evidence="13">GPI-anchored protein 10</fullName>
    </alternativeName>
    <alternativeName>
        <fullName evidence="14">Repressed by TUP1 protein 51</fullName>
    </alternativeName>
    <alternativeName>
        <fullName>Repressed by TUP1 protein 8</fullName>
    </alternativeName>
</protein>